<accession>Q6T499</accession>
<proteinExistence type="evidence at transcript level"/>
<reference key="1">
    <citation type="journal article" date="2005" name="FEBS J.">
        <title>The male seahorse synthesizes and secretes a novel C-type lectin into the brood pouch during early pregnancy.</title>
        <authorList>
            <person name="Melamed P."/>
            <person name="Xue Y."/>
            <person name="Poon J.F."/>
            <person name="Wu Q."/>
            <person name="Xie H."/>
            <person name="Yeo J."/>
            <person name="Foo T.W."/>
            <person name="Chua H.K."/>
        </authorList>
    </citation>
    <scope>NUCLEOTIDE SEQUENCE [MRNA]</scope>
</reference>
<comment type="function">
    <text evidence="1">Cytosolic CRABPs may regulate the access of retinoic acid to the nuclear retinoic acid receptors.</text>
</comment>
<comment type="subcellular location">
    <subcellularLocation>
        <location evidence="1">Cytoplasm</location>
    </subcellularLocation>
</comment>
<comment type="domain">
    <text evidence="1">Forms a beta-barrel structure that accommodates hydrophobic ligands in its interior.</text>
</comment>
<comment type="similarity">
    <text evidence="2">Belongs to the calycin superfamily. Fatty-acid binding protein (FABP) family.</text>
</comment>
<evidence type="ECO:0000250" key="1"/>
<evidence type="ECO:0000305" key="2"/>
<organism>
    <name type="scientific">Hippocampus comes</name>
    <name type="common">Tiger tail seahorse</name>
    <dbReference type="NCBI Taxonomy" id="109280"/>
    <lineage>
        <taxon>Eukaryota</taxon>
        <taxon>Metazoa</taxon>
        <taxon>Chordata</taxon>
        <taxon>Craniata</taxon>
        <taxon>Vertebrata</taxon>
        <taxon>Euteleostomi</taxon>
        <taxon>Actinopterygii</taxon>
        <taxon>Neopterygii</taxon>
        <taxon>Teleostei</taxon>
        <taxon>Neoteleostei</taxon>
        <taxon>Acanthomorphata</taxon>
        <taxon>Syngnathiaria</taxon>
        <taxon>Syngnathiformes</taxon>
        <taxon>Syngnathoidei</taxon>
        <taxon>Syngnathidae</taxon>
        <taxon>Hippocampus</taxon>
    </lineage>
</organism>
<feature type="initiator methionine" description="Removed" evidence="1">
    <location>
        <position position="1"/>
    </location>
</feature>
<feature type="chain" id="PRO_0000067411" description="Cellular retinoic acid-binding protein 1">
    <location>
        <begin position="2"/>
        <end position="137"/>
    </location>
</feature>
<feature type="short sequence motif" description="Nuclear localization signal" evidence="1">
    <location>
        <begin position="21"/>
        <end position="31"/>
    </location>
</feature>
<feature type="binding site" evidence="1">
    <location>
        <begin position="132"/>
        <end position="134"/>
    </location>
    <ligand>
        <name>all-trans-retinoate</name>
        <dbReference type="ChEBI" id="CHEBI:35291"/>
    </ligand>
</feature>
<gene>
    <name type="primary">crabp1</name>
</gene>
<protein>
    <recommendedName>
        <fullName>Cellular retinoic acid-binding protein 1</fullName>
    </recommendedName>
    <alternativeName>
        <fullName>Cellular retinoic acid-binding protein I</fullName>
        <shortName>CRABP-I</shortName>
    </alternativeName>
</protein>
<keyword id="KW-0963">Cytoplasm</keyword>
<keyword id="KW-0683">Retinol-binding</keyword>
<keyword id="KW-0813">Transport</keyword>
<keyword id="KW-0845">Vitamin A</keyword>
<name>RABP1_HIPCM</name>
<sequence>MPNFAGTWKMKSSENFDELLKALGVNAMLRKLAVTAASKPHVEIQQNGEQFYIRTYTTIRTTEINFHIGEEFNEETVDGRKCKSLATWETENKMYCKQTLLSGNGPKTFWTRELRGDELILTFGADDVVCTRIYMRA</sequence>
<dbReference type="EMBL" id="AY437393">
    <property type="protein sequence ID" value="AAR11382.1"/>
    <property type="molecule type" value="mRNA"/>
</dbReference>
<dbReference type="SMR" id="Q6T499"/>
<dbReference type="STRING" id="109280.ENSHCOP00000027026"/>
<dbReference type="Ensembl" id="ENSHCOT00000022765.1">
    <property type="protein sequence ID" value="ENSHCOP00000027026.1"/>
    <property type="gene ID" value="ENSHCOG00000018495.1"/>
</dbReference>
<dbReference type="GeneID" id="109525887"/>
<dbReference type="KEGG" id="hcq:109525887"/>
<dbReference type="GeneTree" id="ENSGT00940000159422"/>
<dbReference type="OMA" id="QSGDHFY"/>
<dbReference type="OrthoDB" id="195110at2759"/>
<dbReference type="Proteomes" id="UP000264820">
    <property type="component" value="Unplaced"/>
</dbReference>
<dbReference type="GO" id="GO:0005737">
    <property type="term" value="C:cytoplasm"/>
    <property type="evidence" value="ECO:0007669"/>
    <property type="project" value="UniProtKB-SubCell"/>
</dbReference>
<dbReference type="GO" id="GO:0016918">
    <property type="term" value="F:retinal binding"/>
    <property type="evidence" value="ECO:0007669"/>
    <property type="project" value="UniProtKB-KW"/>
</dbReference>
<dbReference type="GO" id="GO:0019841">
    <property type="term" value="F:retinol binding"/>
    <property type="evidence" value="ECO:0007669"/>
    <property type="project" value="UniProtKB-KW"/>
</dbReference>
<dbReference type="FunFam" id="2.40.128.20:FF:000001">
    <property type="entry name" value="Fatty acid-binding protein, adipocyte"/>
    <property type="match status" value="1"/>
</dbReference>
<dbReference type="Gene3D" id="2.40.128.20">
    <property type="match status" value="1"/>
</dbReference>
<dbReference type="InterPro" id="IPR012674">
    <property type="entry name" value="Calycin"/>
</dbReference>
<dbReference type="InterPro" id="IPR000463">
    <property type="entry name" value="Fatty_acid-bd"/>
</dbReference>
<dbReference type="InterPro" id="IPR031259">
    <property type="entry name" value="ILBP"/>
</dbReference>
<dbReference type="InterPro" id="IPR000566">
    <property type="entry name" value="Lipocln_cytosolic_FA-bd_dom"/>
</dbReference>
<dbReference type="PANTHER" id="PTHR11955">
    <property type="entry name" value="FATTY ACID BINDING PROTEIN"/>
    <property type="match status" value="1"/>
</dbReference>
<dbReference type="Pfam" id="PF00061">
    <property type="entry name" value="Lipocalin"/>
    <property type="match status" value="1"/>
</dbReference>
<dbReference type="PRINTS" id="PR00178">
    <property type="entry name" value="FATTYACIDBP"/>
</dbReference>
<dbReference type="SUPFAM" id="SSF50814">
    <property type="entry name" value="Lipocalins"/>
    <property type="match status" value="1"/>
</dbReference>
<dbReference type="PROSITE" id="PS00214">
    <property type="entry name" value="FABP"/>
    <property type="match status" value="1"/>
</dbReference>